<protein>
    <recommendedName>
        <fullName>Nutritionally-regulated adipose and cardiac-enriched protein homolog</fullName>
    </recommendedName>
</protein>
<reference key="1">
    <citation type="journal article" date="2009" name="Science">
        <title>The genome sequence of taurine cattle: a window to ruminant biology and evolution.</title>
        <authorList>
            <consortium name="The bovine genome sequencing and analysis consortium"/>
        </authorList>
    </citation>
    <scope>NUCLEOTIDE SEQUENCE [LARGE SCALE GENOMIC DNA]</scope>
    <source>
        <strain>Hereford</strain>
    </source>
</reference>
<reference key="2">
    <citation type="submission" date="2006-02" db="EMBL/GenBank/DDBJ databases">
        <authorList>
            <consortium name="NIH - Mammalian Gene Collection (MGC) project"/>
        </authorList>
    </citation>
    <scope>NUCLEOTIDE SEQUENCE [LARGE SCALE MRNA] (ISOFORM 2)</scope>
    <source>
        <strain>Hereford</strain>
        <tissue>Heart ventricle</tissue>
    </source>
</reference>
<dbReference type="EMBL" id="AAFC03077649">
    <property type="status" value="NOT_ANNOTATED_CDS"/>
    <property type="molecule type" value="Genomic_DNA"/>
</dbReference>
<dbReference type="EMBL" id="BC114110">
    <property type="protein sequence ID" value="AAI14111.1"/>
    <property type="molecule type" value="mRNA"/>
</dbReference>
<dbReference type="RefSeq" id="NP_001192317.1">
    <property type="nucleotide sequence ID" value="NM_001205388.1"/>
</dbReference>
<dbReference type="FunCoup" id="Q29RM6">
    <property type="interactions" value="8"/>
</dbReference>
<dbReference type="STRING" id="9913.ENSBTAP00000073912"/>
<dbReference type="PaxDb" id="9913-ENSBTAP00000030882"/>
<dbReference type="GeneID" id="615365"/>
<dbReference type="KEGG" id="bta:615365"/>
<dbReference type="CTD" id="615365"/>
<dbReference type="eggNOG" id="ENOG502S3R9">
    <property type="taxonomic scope" value="Eukaryota"/>
</dbReference>
<dbReference type="InParanoid" id="Q29RM6"/>
<dbReference type="OrthoDB" id="9535799at2759"/>
<dbReference type="Proteomes" id="UP000009136">
    <property type="component" value="Unplaced"/>
</dbReference>
<dbReference type="GO" id="GO:0005886">
    <property type="term" value="C:plasma membrane"/>
    <property type="evidence" value="ECO:0000318"/>
    <property type="project" value="GO_Central"/>
</dbReference>
<dbReference type="InterPro" id="IPR028114">
    <property type="entry name" value="DUF4658"/>
</dbReference>
<dbReference type="PANTHER" id="PTHR36868">
    <property type="entry name" value="NUTRITIONALLY-REGULATED ADIPOSE AND CARDIAC ENRICHED PROTEIN HOMOLOG"/>
    <property type="match status" value="1"/>
</dbReference>
<dbReference type="PANTHER" id="PTHR36868:SF1">
    <property type="entry name" value="NUTRITIONALLY-REGULATED ADIPOSE AND CARDIAC ENRICHED PROTEIN HOMOLOG"/>
    <property type="match status" value="1"/>
</dbReference>
<dbReference type="Pfam" id="PF15555">
    <property type="entry name" value="DUF4658"/>
    <property type="match status" value="1"/>
</dbReference>
<comment type="subcellular location">
    <subcellularLocation>
        <location evidence="1">Cell membrane</location>
        <topology evidence="1">Single-pass membrane protein</topology>
    </subcellularLocation>
</comment>
<comment type="alternative products">
    <event type="alternative splicing"/>
    <isoform>
        <id>Q29RM6-1</id>
        <name>1</name>
        <sequence type="displayed"/>
    </isoform>
    <isoform>
        <id>Q29RM6-2</id>
        <name>2</name>
        <sequence type="described" ref="VSP_032524"/>
    </isoform>
</comment>
<sequence length="159" mass="17514">MKTAVHALSPDSRPETQHQTRKNEEAAPGSPTPRAGREGRKGPASILRRSPQERCGRGDEPRRTTRHVRFREPLEVAVHYIACREPTTAVQAPSRPRPRGGSLLLRLTACILLALALGMCCGQAGPMARALEDFRARLLAALLRLPLAALDCWRCLLQL</sequence>
<proteinExistence type="evidence at transcript level"/>
<keyword id="KW-0025">Alternative splicing</keyword>
<keyword id="KW-1003">Cell membrane</keyword>
<keyword id="KW-0472">Membrane</keyword>
<keyword id="KW-1185">Reference proteome</keyword>
<keyword id="KW-0812">Transmembrane</keyword>
<keyword id="KW-1133">Transmembrane helix</keyword>
<feature type="chain" id="PRO_0000326051" description="Nutritionally-regulated adipose and cardiac-enriched protein homolog">
    <location>
        <begin position="1"/>
        <end position="159"/>
    </location>
</feature>
<feature type="transmembrane region" description="Helical" evidence="2">
    <location>
        <begin position="107"/>
        <end position="124"/>
    </location>
</feature>
<feature type="region of interest" description="Disordered" evidence="3">
    <location>
        <begin position="1"/>
        <end position="67"/>
    </location>
</feature>
<feature type="compositionally biased region" description="Basic and acidic residues" evidence="3">
    <location>
        <begin position="12"/>
        <end position="25"/>
    </location>
</feature>
<feature type="compositionally biased region" description="Basic and acidic residues" evidence="3">
    <location>
        <begin position="50"/>
        <end position="63"/>
    </location>
</feature>
<feature type="splice variant" id="VSP_032524" description="In isoform 2." evidence="4">
    <location>
        <begin position="80"/>
        <end position="159"/>
    </location>
</feature>
<organism>
    <name type="scientific">Bos taurus</name>
    <name type="common">Bovine</name>
    <dbReference type="NCBI Taxonomy" id="9913"/>
    <lineage>
        <taxon>Eukaryota</taxon>
        <taxon>Metazoa</taxon>
        <taxon>Chordata</taxon>
        <taxon>Craniata</taxon>
        <taxon>Vertebrata</taxon>
        <taxon>Euteleostomi</taxon>
        <taxon>Mammalia</taxon>
        <taxon>Eutheria</taxon>
        <taxon>Laurasiatheria</taxon>
        <taxon>Artiodactyla</taxon>
        <taxon>Ruminantia</taxon>
        <taxon>Pecora</taxon>
        <taxon>Bovidae</taxon>
        <taxon>Bovinae</taxon>
        <taxon>Bos</taxon>
    </lineage>
</organism>
<evidence type="ECO:0000250" key="1"/>
<evidence type="ECO:0000255" key="2"/>
<evidence type="ECO:0000256" key="3">
    <source>
        <dbReference type="SAM" id="MobiDB-lite"/>
    </source>
</evidence>
<evidence type="ECO:0000303" key="4">
    <source ref="2"/>
</evidence>
<gene>
    <name type="primary">NRAC</name>
</gene>
<accession>Q29RM6</accession>
<name>NRAC_BOVIN</name>